<dbReference type="EMBL" id="J04692">
    <property type="protein sequence ID" value="AAA50506.1"/>
    <property type="molecule type" value="Genomic_RNA"/>
</dbReference>
<dbReference type="PIR" id="S26764">
    <property type="entry name" value="S26764"/>
</dbReference>
<dbReference type="RefSeq" id="NP_620494.1">
    <molecule id="P32503-1"/>
    <property type="nucleotide sequence ID" value="NC_003745.1"/>
</dbReference>
<dbReference type="PDB" id="1M1C">
    <property type="method" value="X-ray"/>
    <property type="resolution" value="3.50 A"/>
    <property type="chains" value="A/B=1-680"/>
</dbReference>
<dbReference type="PDB" id="6YGD">
    <property type="method" value="X-ray"/>
    <property type="resolution" value="2.75 A"/>
    <property type="chains" value="D=1-5"/>
</dbReference>
<dbReference type="PDB" id="8A5T">
    <property type="method" value="EM"/>
    <property type="resolution" value="3.78 A"/>
    <property type="chains" value="A/B=1-680"/>
</dbReference>
<dbReference type="PDB" id="8PE4">
    <property type="method" value="EM"/>
    <property type="resolution" value="3.21 A"/>
    <property type="chains" value="A/B=1-680"/>
</dbReference>
<dbReference type="PDBsum" id="1M1C"/>
<dbReference type="PDBsum" id="6YGD"/>
<dbReference type="PDBsum" id="8A5T"/>
<dbReference type="PDBsum" id="8PE4"/>
<dbReference type="EMDB" id="EMD-15189"/>
<dbReference type="EMDB" id="EMD-17628"/>
<dbReference type="SMR" id="P32503"/>
<dbReference type="iPTMnet" id="P32503"/>
<dbReference type="KEGG" id="vg:940477"/>
<dbReference type="OrthoDB" id="6256at10239"/>
<dbReference type="EvolutionaryTrace" id="P32503"/>
<dbReference type="Proteomes" id="UP000000351">
    <property type="component" value="Segment"/>
</dbReference>
<dbReference type="GO" id="GO:0019028">
    <property type="term" value="C:viral capsid"/>
    <property type="evidence" value="ECO:0007669"/>
    <property type="project" value="UniProtKB-KW"/>
</dbReference>
<dbReference type="GO" id="GO:0075523">
    <property type="term" value="P:viral translational frameshifting"/>
    <property type="evidence" value="ECO:0007669"/>
    <property type="project" value="UniProtKB-KW"/>
</dbReference>
<dbReference type="Gene3D" id="3.90.1840.10">
    <property type="entry name" value="Major capsid protein"/>
    <property type="match status" value="1"/>
</dbReference>
<dbReference type="InterPro" id="IPR015302">
    <property type="entry name" value="Major_coat_LA-virus"/>
</dbReference>
<dbReference type="InterPro" id="IPR036332">
    <property type="entry name" value="Major_coat_LA-virus_sf"/>
</dbReference>
<dbReference type="Pfam" id="PF09220">
    <property type="entry name" value="LA-virus_coat"/>
    <property type="match status" value="1"/>
</dbReference>
<dbReference type="SUPFAM" id="SSF82856">
    <property type="entry name" value="L-A virus major coat protein"/>
    <property type="match status" value="1"/>
</dbReference>
<reference key="1">
    <citation type="journal article" date="1989" name="J. Biol. Chem.">
        <title>The double-stranded RNA genome of yeast virus L-A encodes its own putative RNA polymerase by fusing two open reading frames.</title>
        <authorList>
            <person name="Icho T."/>
            <person name="Wickner R.B."/>
        </authorList>
    </citation>
    <scope>NUCLEOTIDE SEQUENCE [GENOMIC RNA]</scope>
</reference>
<reference key="2">
    <citation type="journal article" date="1984" name="Mol. Cell. Biol.">
        <title>Multiple L double-stranded RNA species of Saccharomyces cerevisiae: evidence for separate encapsidation.</title>
        <authorList>
            <person name="Thiele D.J."/>
            <person name="Hannig E.M."/>
            <person name="Leibowitz M.J."/>
        </authorList>
    </citation>
    <scope>NUCLEOTIDE SEQUENCE [GENOMIC RNA] OF 1-27</scope>
</reference>
<reference key="3">
    <citation type="journal article" date="1992" name="J. Biol. Chem.">
        <title>MAK3 encodes an N-acetyltransferase whose modification of the L-A gag NH2 terminus is necessary for virus particle assembly.</title>
        <authorList>
            <person name="Tercero J.C."/>
            <person name="Wickner R.B."/>
        </authorList>
    </citation>
    <scope>ACETYLATION AT MET-1</scope>
</reference>
<reference key="4">
    <citation type="journal article" date="1992" name="Mol. Cell. Biol.">
        <title>The coat protein of the yeast double-stranded RNA virus L-A attaches covalently to the cap structure of eukaryotic mRNA.</title>
        <authorList>
            <person name="Blanc A."/>
            <person name="Goyer C."/>
            <person name="Sonenberg N."/>
        </authorList>
    </citation>
    <scope>FUNCTION</scope>
</reference>
<reference key="5">
    <citation type="journal article" date="1995" name="Mol. Cell. Biol.">
        <title>Decoying the cap- mRNA degradation system by a double-stranded RNA virus and poly(A)- mRNA surveillance by a yeast antiviral system.</title>
        <authorList>
            <person name="Masison D.C."/>
            <person name="Blanc A."/>
            <person name="Ribas J.C."/>
            <person name="Carroll K."/>
            <person name="Sonenberg N."/>
            <person name="Wickner R.B."/>
        </authorList>
    </citation>
    <scope>FUNCTION</scope>
</reference>
<reference key="6">
    <citation type="journal article" date="2002" name="Nat. Struct. Biol.">
        <title>L-A virus at 3.4 A resolution reveals particle architecture and mRNA decapping mechanism.</title>
        <authorList>
            <person name="Naitow H."/>
            <person name="Tang J."/>
            <person name="Canady M."/>
            <person name="Wickner R.B."/>
            <person name="Johnson J.E."/>
        </authorList>
    </citation>
    <scope>X-RAY CRYSTALLOGRAPHY (3.4 ANGSTROMS)</scope>
</reference>
<feature type="chain" id="PRO_0000222991" description="Major capsid protein">
    <location>
        <begin position="1"/>
        <end position="680"/>
    </location>
</feature>
<feature type="modified residue" description="N-acetylmethionine; by host N-acetyltransferase MAK3" evidence="1">
    <location>
        <position position="1"/>
    </location>
</feature>
<feature type="sequence conflict" description="In Ref. 2." evidence="2" ref="2">
    <original>FV</original>
    <variation>LL</variation>
    <location>
        <begin position="26"/>
        <end position="27"/>
    </location>
</feature>
<feature type="helix" evidence="3">
    <location>
        <begin position="2"/>
        <end position="5"/>
    </location>
</feature>
<feature type="turn" evidence="3">
    <location>
        <begin position="6"/>
        <end position="11"/>
    </location>
</feature>
<feature type="strand" evidence="3">
    <location>
        <begin position="22"/>
        <end position="24"/>
    </location>
</feature>
<feature type="strand" evidence="3">
    <location>
        <begin position="26"/>
        <end position="38"/>
    </location>
</feature>
<feature type="strand" evidence="3">
    <location>
        <begin position="41"/>
        <end position="54"/>
    </location>
</feature>
<feature type="strand" evidence="3">
    <location>
        <begin position="60"/>
        <end position="64"/>
    </location>
</feature>
<feature type="helix" evidence="3">
    <location>
        <begin position="75"/>
        <end position="77"/>
    </location>
</feature>
<feature type="strand" evidence="3">
    <location>
        <begin position="80"/>
        <end position="84"/>
    </location>
</feature>
<feature type="helix" evidence="3">
    <location>
        <begin position="86"/>
        <end position="95"/>
    </location>
</feature>
<feature type="helix" evidence="3">
    <location>
        <begin position="101"/>
        <end position="110"/>
    </location>
</feature>
<feature type="helix" evidence="3">
    <location>
        <begin position="121"/>
        <end position="138"/>
    </location>
</feature>
<feature type="strand" evidence="3">
    <location>
        <begin position="153"/>
        <end position="157"/>
    </location>
</feature>
<feature type="turn" evidence="3">
    <location>
        <begin position="165"/>
        <end position="167"/>
    </location>
</feature>
<feature type="turn" evidence="3">
    <location>
        <begin position="178"/>
        <end position="180"/>
    </location>
</feature>
<feature type="strand" evidence="3">
    <location>
        <begin position="195"/>
        <end position="198"/>
    </location>
</feature>
<feature type="strand" evidence="3">
    <location>
        <begin position="200"/>
        <end position="202"/>
    </location>
</feature>
<feature type="helix" evidence="3">
    <location>
        <begin position="208"/>
        <end position="217"/>
    </location>
</feature>
<feature type="strand" evidence="3">
    <location>
        <begin position="225"/>
        <end position="227"/>
    </location>
</feature>
<feature type="helix" evidence="3">
    <location>
        <begin position="228"/>
        <end position="230"/>
    </location>
</feature>
<feature type="strand" evidence="3">
    <location>
        <begin position="241"/>
        <end position="243"/>
    </location>
</feature>
<feature type="helix" evidence="3">
    <location>
        <begin position="252"/>
        <end position="256"/>
    </location>
</feature>
<feature type="turn" evidence="3">
    <location>
        <begin position="261"/>
        <end position="263"/>
    </location>
</feature>
<feature type="helix" evidence="3">
    <location>
        <begin position="269"/>
        <end position="282"/>
    </location>
</feature>
<feature type="helix" evidence="3">
    <location>
        <begin position="286"/>
        <end position="298"/>
    </location>
</feature>
<feature type="helix" evidence="3">
    <location>
        <begin position="309"/>
        <end position="312"/>
    </location>
</feature>
<feature type="turn" evidence="3">
    <location>
        <begin position="313"/>
        <end position="315"/>
    </location>
</feature>
<feature type="strand" evidence="3">
    <location>
        <begin position="319"/>
        <end position="323"/>
    </location>
</feature>
<feature type="turn" evidence="3">
    <location>
        <begin position="333"/>
        <end position="336"/>
    </location>
</feature>
<feature type="strand" evidence="3">
    <location>
        <begin position="340"/>
        <end position="344"/>
    </location>
</feature>
<feature type="helix" evidence="3">
    <location>
        <begin position="345"/>
        <end position="356"/>
    </location>
</feature>
<feature type="helix" evidence="3">
    <location>
        <begin position="359"/>
        <end position="382"/>
    </location>
</feature>
<feature type="turn" evidence="3">
    <location>
        <begin position="383"/>
        <end position="385"/>
    </location>
</feature>
<feature type="turn" evidence="3">
    <location>
        <begin position="394"/>
        <end position="396"/>
    </location>
</feature>
<feature type="helix" evidence="3">
    <location>
        <begin position="398"/>
        <end position="400"/>
    </location>
</feature>
<feature type="helix" evidence="3">
    <location>
        <begin position="402"/>
        <end position="414"/>
    </location>
</feature>
<feature type="strand" evidence="3">
    <location>
        <begin position="416"/>
        <end position="418"/>
    </location>
</feature>
<feature type="strand" evidence="3">
    <location>
        <begin position="422"/>
        <end position="425"/>
    </location>
</feature>
<feature type="strand" evidence="3">
    <location>
        <begin position="427"/>
        <end position="429"/>
    </location>
</feature>
<feature type="helix" evidence="3">
    <location>
        <begin position="431"/>
        <end position="433"/>
    </location>
</feature>
<feature type="strand" evidence="3">
    <location>
        <begin position="439"/>
        <end position="443"/>
    </location>
</feature>
<feature type="strand" evidence="3">
    <location>
        <begin position="458"/>
        <end position="463"/>
    </location>
</feature>
<feature type="turn" evidence="3">
    <location>
        <begin position="470"/>
        <end position="475"/>
    </location>
</feature>
<feature type="strand" evidence="3">
    <location>
        <begin position="478"/>
        <end position="481"/>
    </location>
</feature>
<feature type="strand" evidence="3">
    <location>
        <begin position="486"/>
        <end position="491"/>
    </location>
</feature>
<feature type="strand" evidence="3">
    <location>
        <begin position="495"/>
        <end position="497"/>
    </location>
</feature>
<feature type="strand" evidence="3">
    <location>
        <begin position="499"/>
        <end position="505"/>
    </location>
</feature>
<feature type="helix" evidence="3">
    <location>
        <begin position="506"/>
        <end position="518"/>
    </location>
</feature>
<feature type="strand" evidence="3">
    <location>
        <begin position="521"/>
        <end position="525"/>
    </location>
</feature>
<feature type="strand" evidence="3">
    <location>
        <begin position="528"/>
        <end position="530"/>
    </location>
</feature>
<feature type="turn" evidence="3">
    <location>
        <begin position="541"/>
        <end position="543"/>
    </location>
</feature>
<feature type="helix" evidence="3">
    <location>
        <begin position="550"/>
        <end position="553"/>
    </location>
</feature>
<feature type="strand" evidence="3">
    <location>
        <begin position="554"/>
        <end position="556"/>
    </location>
</feature>
<feature type="strand" evidence="3">
    <location>
        <begin position="559"/>
        <end position="567"/>
    </location>
</feature>
<feature type="turn" evidence="3">
    <location>
        <begin position="581"/>
        <end position="583"/>
    </location>
</feature>
<feature type="strand" evidence="3">
    <location>
        <begin position="587"/>
        <end position="600"/>
    </location>
</feature>
<feature type="turn" evidence="3">
    <location>
        <begin position="601"/>
        <end position="603"/>
    </location>
</feature>
<feature type="strand" evidence="3">
    <location>
        <begin position="604"/>
        <end position="606"/>
    </location>
</feature>
<feature type="turn" evidence="3">
    <location>
        <begin position="613"/>
        <end position="615"/>
    </location>
</feature>
<feature type="strand" evidence="3">
    <location>
        <begin position="623"/>
        <end position="627"/>
    </location>
</feature>
<feature type="turn" evidence="3">
    <location>
        <begin position="631"/>
        <end position="634"/>
    </location>
</feature>
<evidence type="ECO:0000269" key="1">
    <source>
    </source>
</evidence>
<evidence type="ECO:0000305" key="2"/>
<evidence type="ECO:0007829" key="3">
    <source>
        <dbReference type="PDB" id="1M1C"/>
    </source>
</evidence>
<comment type="function">
    <text>Capsid protein self-assembles to form an icosahedral capsid with a T=2 symmetry, 40 nm in diameter, and consisting of 60 capsid proteins asymmetric dimers. The capsid encapsulates the genomic dsRNA and the polymerase and remains intact following cell entry to protect the dsRNA from degradation and to prevent unfavorable antiviral responses in the host cell during all the replication cycle of the virus. Nascent transcripts are transcribed within the structural confines of the virion and are extruded into the cytoplasm.</text>
</comment>
<comment type="function">
    <text>Binds and removes 5' cap structures from cellular mRNA. Forms a covalent bond with m7GMP through His-154 of the capsid protein while releasing the mRNA body.</text>
</comment>
<comment type="subcellular location">
    <subcellularLocation>
        <location evidence="2">Virion</location>
    </subcellularLocation>
</comment>
<comment type="alternative products">
    <event type="ribosomal frameshifting"/>
    <isoform>
        <id>P32503-1</id>
        <name>Major capsid protein</name>
        <name>Gag protein</name>
        <sequence type="displayed"/>
    </isoform>
    <isoform>
        <id>Q87022-1</id>
        <name>RNA-directed RNA polymerase</name>
        <name>Pol protein</name>
        <sequence type="external"/>
    </isoform>
</comment>
<comment type="PTM">
    <text evidence="1">Acetylation is necessary for viral assembly.</text>
</comment>
<comment type="miscellaneous">
    <molecule>Isoform Major capsid protein</molecule>
    <text>Produced by conventional translation.</text>
</comment>
<comment type="similarity">
    <text evidence="2">Belongs to the totivirus major capsid protein family.</text>
</comment>
<comment type="online information" name="Virus Particle ExploreR db">
    <link uri="https://viperdb.org/Info_Page.php?VDB=1m1c"/>
    <text>Icosahedral capsid structure</text>
</comment>
<proteinExistence type="evidence at protein level"/>
<accession>P32503</accession>
<keyword id="KW-0002">3D-structure</keyword>
<keyword id="KW-0007">Acetylation</keyword>
<keyword id="KW-0167">Capsid protein</keyword>
<keyword id="KW-1185">Reference proteome</keyword>
<keyword id="KW-0688">Ribosomal frameshifting</keyword>
<keyword id="KW-0946">Virion</keyword>
<name>GAG_SCVLA</name>
<sequence>MLRFVTKNSQDKSSDLFSICSDRGTFVAHNRVRTDFKFDNLVFNRVYGVSQKFTLVGNPTVCFNEGSSYLEGIAKKYLTLDGGLAIDNVLNELRSTCGIPGNAVASHAYNITSWRWYDNHVALLMNMLRAYHLQVLTEQGQYSAGDIPMYHDGHVKIKLPVTIDDTAGPTQFAWPSDRSTDSYPDWAQFSESFPSIDVPYLDVRPLTVTEVNFVLMMMSKWHRRTNLAIDYEAPQLADKFAYRHALTVQDADEWIEGDRTDDQFRPPSSKVMLSALRKYVNHNRLYNQFYTAAQLLAQIMMKPVPNCAEGYAWLMHDALVNIPKFGSIRGRYPFLLSGDAALIQATALEDWSAIMAKPELVFTYAMQVSVALNTGLYLRRVKKTGFGTTIDDSYEDGAFLQPETFVQAALACCTGQDAPLNGMSDVYVTYPDLLEFDAVTQVPITVIEPAGYNIVDDHLVVVGVPVACSPYMIFPVAAFDTANPYCGNFVIKAANKYLRKGAVYDKLEAWKLAWALRVAGYDTHFKVYGDTHGLTKFYADNGDTWTHIPEFVTDGDVMEVFVTAIERRARHFVELPRLNSPAFFRSVEVSTTIYDTHVQAGAHAVYHASRINLDYVKPVSTGIQVINAGELKNYWGSVRRTQQGLGVVGLTMPAVMPTGEPTAGAAHEELIEQADNVLVE</sequence>
<protein>
    <recommendedName>
        <fullName>Major capsid protein</fullName>
    </recommendedName>
    <alternativeName>
        <fullName>Gag protein</fullName>
    </alternativeName>
    <alternativeName>
        <fullName>Major coat protein</fullName>
    </alternativeName>
</protein>
<gene>
    <name type="primary">gag</name>
</gene>
<organism>
    <name type="scientific">Saccharomyces cerevisiae virus L-A</name>
    <name type="common">ScV-L-A</name>
    <name type="synonym">ScVL1</name>
    <dbReference type="NCBI Taxonomy" id="11008"/>
    <lineage>
        <taxon>Viruses</taxon>
        <taxon>Riboviria</taxon>
        <taxon>Orthornavirae</taxon>
        <taxon>Duplornaviricota</taxon>
        <taxon>Chrymotiviricetes</taxon>
        <taxon>Ghabrivirales</taxon>
        <taxon>Totiviridae</taxon>
        <taxon>Totivirus</taxon>
    </lineage>
</organism>
<organismHost>
    <name type="scientific">Saccharomyces cerevisiae</name>
    <name type="common">Baker's yeast</name>
    <dbReference type="NCBI Taxonomy" id="4932"/>
</organismHost>